<comment type="function">
    <text evidence="1">Catalyzes the exchange of initiation factor 2-bound GDP for GTP.</text>
</comment>
<comment type="subunit">
    <text evidence="2">Complex of two different subunits.</text>
</comment>
<comment type="similarity">
    <text evidence="2">Belongs to the eIF-2B alpha/beta/delta subunits family.</text>
</comment>
<evidence type="ECO:0000250" key="1"/>
<evidence type="ECO:0000305" key="2"/>
<evidence type="ECO:0007829" key="3">
    <source>
        <dbReference type="PDB" id="1VB5"/>
    </source>
</evidence>
<sequence length="276" mass="31402">MLPERVLEILREMKRERIKGASWLAKKGAEAFLTLAEELDESLLEDAIMELREEVVKVNPSMASLYNLARFIPVTNRRDILKSRALEFLRRMEEAKRELASIGAQLIDDGDVIITHSFSSTVLEIIRTAKERKKRFKVILTESSPDYEGLHLARELEFSGIEFEVITDAQMGLFCREASIAIVGADMITKDGYVVNKAGTYLLALACHENAIPFYVAAETYKFHPTLKSGDVMLMERDLIRGNVRIRNVLFDVTPWKYVRGIITELGIVIPPRDIQ</sequence>
<dbReference type="EMBL" id="BA000001">
    <property type="protein sequence ID" value="BAA29526.1"/>
    <property type="molecule type" value="Genomic_DNA"/>
</dbReference>
<dbReference type="PIR" id="A71155">
    <property type="entry name" value="A71155"/>
</dbReference>
<dbReference type="RefSeq" id="WP_010884550.1">
    <property type="nucleotide sequence ID" value="NC_000961.1"/>
</dbReference>
<dbReference type="PDB" id="1VB5">
    <property type="method" value="X-ray"/>
    <property type="resolution" value="2.20 A"/>
    <property type="chains" value="A/B=1-276"/>
</dbReference>
<dbReference type="PDBsum" id="1VB5"/>
<dbReference type="SMR" id="O58185"/>
<dbReference type="STRING" id="70601.gene:9377371"/>
<dbReference type="EnsemblBacteria" id="BAA29526">
    <property type="protein sequence ID" value="BAA29526"/>
    <property type="gene ID" value="BAA29526"/>
</dbReference>
<dbReference type="GeneID" id="1444337"/>
<dbReference type="KEGG" id="pho:PH0440"/>
<dbReference type="eggNOG" id="arCOG01125">
    <property type="taxonomic scope" value="Archaea"/>
</dbReference>
<dbReference type="OrthoDB" id="45195at2157"/>
<dbReference type="EvolutionaryTrace" id="O58185"/>
<dbReference type="Proteomes" id="UP000000752">
    <property type="component" value="Chromosome"/>
</dbReference>
<dbReference type="GO" id="GO:0005085">
    <property type="term" value="F:guanyl-nucleotide exchange factor activity"/>
    <property type="evidence" value="ECO:0007669"/>
    <property type="project" value="TreeGrafter"/>
</dbReference>
<dbReference type="GO" id="GO:0003743">
    <property type="term" value="F:translation initiation factor activity"/>
    <property type="evidence" value="ECO:0007669"/>
    <property type="project" value="UniProtKB-KW"/>
</dbReference>
<dbReference type="Gene3D" id="1.20.120.420">
    <property type="entry name" value="translation initiation factor eif-2b, domain 1"/>
    <property type="match status" value="1"/>
</dbReference>
<dbReference type="Gene3D" id="3.40.50.10470">
    <property type="entry name" value="Translation initiation factor eif-2b, domain 2"/>
    <property type="match status" value="1"/>
</dbReference>
<dbReference type="InterPro" id="IPR051501">
    <property type="entry name" value="eIF2B_alpha/beta/delta"/>
</dbReference>
<dbReference type="InterPro" id="IPR000649">
    <property type="entry name" value="IF-2B-related"/>
</dbReference>
<dbReference type="InterPro" id="IPR042529">
    <property type="entry name" value="IF_2B-like_C"/>
</dbReference>
<dbReference type="InterPro" id="IPR027363">
    <property type="entry name" value="M1Pi_N"/>
</dbReference>
<dbReference type="InterPro" id="IPR037171">
    <property type="entry name" value="NagB/RpiA_transferase-like"/>
</dbReference>
<dbReference type="NCBIfam" id="NF006210">
    <property type="entry name" value="PRK08335.1"/>
    <property type="match status" value="1"/>
</dbReference>
<dbReference type="PANTHER" id="PTHR45860">
    <property type="entry name" value="TRANSLATION INITIATION FACTOR EIF-2B SUBUNIT ALPHA"/>
    <property type="match status" value="1"/>
</dbReference>
<dbReference type="PANTHER" id="PTHR45860:SF1">
    <property type="entry name" value="TRANSLATION INITIATION FACTOR EIF-2B SUBUNIT ALPHA"/>
    <property type="match status" value="1"/>
</dbReference>
<dbReference type="Pfam" id="PF01008">
    <property type="entry name" value="IF-2B"/>
    <property type="match status" value="1"/>
</dbReference>
<dbReference type="SUPFAM" id="SSF100950">
    <property type="entry name" value="NagB/RpiA/CoA transferase-like"/>
    <property type="match status" value="1"/>
</dbReference>
<name>EI2BL_PYRHO</name>
<accession>O58185</accession>
<keyword id="KW-0002">3D-structure</keyword>
<keyword id="KW-0396">Initiation factor</keyword>
<keyword id="KW-0648">Protein biosynthesis</keyword>
<organism>
    <name type="scientific">Pyrococcus horikoshii (strain ATCC 700860 / DSM 12428 / JCM 9974 / NBRC 100139 / OT-3)</name>
    <dbReference type="NCBI Taxonomy" id="70601"/>
    <lineage>
        <taxon>Archaea</taxon>
        <taxon>Methanobacteriati</taxon>
        <taxon>Methanobacteriota</taxon>
        <taxon>Thermococci</taxon>
        <taxon>Thermococcales</taxon>
        <taxon>Thermococcaceae</taxon>
        <taxon>Pyrococcus</taxon>
    </lineage>
</organism>
<protein>
    <recommendedName>
        <fullName>Putative translation initiation factor eIF-2B subunit 2-like</fullName>
    </recommendedName>
    <alternativeName>
        <fullName>eIF-2B GDP-GTP exchange factor</fullName>
    </alternativeName>
</protein>
<feature type="chain" id="PRO_0000156109" description="Putative translation initiation factor eIF-2B subunit 2-like">
    <location>
        <begin position="1"/>
        <end position="276"/>
    </location>
</feature>
<feature type="helix" evidence="3">
    <location>
        <begin position="4"/>
        <end position="15"/>
    </location>
</feature>
<feature type="strand" evidence="3">
    <location>
        <begin position="17"/>
        <end position="19"/>
    </location>
</feature>
<feature type="helix" evidence="3">
    <location>
        <begin position="21"/>
        <end position="38"/>
    </location>
</feature>
<feature type="turn" evidence="3">
    <location>
        <begin position="41"/>
        <end position="43"/>
    </location>
</feature>
<feature type="helix" evidence="3">
    <location>
        <begin position="44"/>
        <end position="58"/>
    </location>
</feature>
<feature type="helix" evidence="3">
    <location>
        <begin position="63"/>
        <end position="71"/>
    </location>
</feature>
<feature type="helix" evidence="3">
    <location>
        <begin position="78"/>
        <end position="106"/>
    </location>
</feature>
<feature type="strand" evidence="3">
    <location>
        <begin position="111"/>
        <end position="114"/>
    </location>
</feature>
<feature type="helix" evidence="3">
    <location>
        <begin position="120"/>
        <end position="131"/>
    </location>
</feature>
<feature type="strand" evidence="3">
    <location>
        <begin position="136"/>
        <end position="141"/>
    </location>
</feature>
<feature type="turn" evidence="3">
    <location>
        <begin position="144"/>
        <end position="147"/>
    </location>
</feature>
<feature type="helix" evidence="3">
    <location>
        <begin position="148"/>
        <end position="158"/>
    </location>
</feature>
<feature type="strand" evidence="3">
    <location>
        <begin position="163"/>
        <end position="166"/>
    </location>
</feature>
<feature type="helix" evidence="3">
    <location>
        <begin position="168"/>
        <end position="170"/>
    </location>
</feature>
<feature type="helix" evidence="3">
    <location>
        <begin position="171"/>
        <end position="175"/>
    </location>
</feature>
<feature type="strand" evidence="3">
    <location>
        <begin position="179"/>
        <end position="183"/>
    </location>
</feature>
<feature type="strand" evidence="3">
    <location>
        <begin position="186"/>
        <end position="188"/>
    </location>
</feature>
<feature type="strand" evidence="3">
    <location>
        <begin position="194"/>
        <end position="197"/>
    </location>
</feature>
<feature type="helix" evidence="3">
    <location>
        <begin position="200"/>
        <end position="209"/>
    </location>
</feature>
<feature type="strand" evidence="3">
    <location>
        <begin position="214"/>
        <end position="217"/>
    </location>
</feature>
<feature type="helix" evidence="3">
    <location>
        <begin position="220"/>
        <end position="222"/>
    </location>
</feature>
<feature type="helix" evidence="3">
    <location>
        <begin position="229"/>
        <end position="231"/>
    </location>
</feature>
<feature type="strand" evidence="3">
    <location>
        <begin position="251"/>
        <end position="254"/>
    </location>
</feature>
<feature type="helix" evidence="3">
    <location>
        <begin position="256"/>
        <end position="258"/>
    </location>
</feature>
<feature type="strand" evidence="3">
    <location>
        <begin position="260"/>
        <end position="264"/>
    </location>
</feature>
<feature type="strand" evidence="3">
    <location>
        <begin position="267"/>
        <end position="269"/>
    </location>
</feature>
<feature type="turn" evidence="3">
    <location>
        <begin position="271"/>
        <end position="274"/>
    </location>
</feature>
<proteinExistence type="evidence at protein level"/>
<gene>
    <name type="ordered locus">PH0440</name>
</gene>
<reference key="1">
    <citation type="journal article" date="1998" name="DNA Res.">
        <title>Complete sequence and gene organization of the genome of a hyper-thermophilic archaebacterium, Pyrococcus horikoshii OT3.</title>
        <authorList>
            <person name="Kawarabayasi Y."/>
            <person name="Sawada M."/>
            <person name="Horikawa H."/>
            <person name="Haikawa Y."/>
            <person name="Hino Y."/>
            <person name="Yamamoto S."/>
            <person name="Sekine M."/>
            <person name="Baba S."/>
            <person name="Kosugi H."/>
            <person name="Hosoyama A."/>
            <person name="Nagai Y."/>
            <person name="Sakai M."/>
            <person name="Ogura K."/>
            <person name="Otsuka R."/>
            <person name="Nakazawa H."/>
            <person name="Takamiya M."/>
            <person name="Ohfuku Y."/>
            <person name="Funahashi T."/>
            <person name="Tanaka T."/>
            <person name="Kudoh Y."/>
            <person name="Yamazaki J."/>
            <person name="Kushida N."/>
            <person name="Oguchi A."/>
            <person name="Aoki K."/>
            <person name="Yoshizawa T."/>
            <person name="Nakamura Y."/>
            <person name="Robb F.T."/>
            <person name="Horikoshi K."/>
            <person name="Masuchi Y."/>
            <person name="Shizuya H."/>
            <person name="Kikuchi H."/>
        </authorList>
    </citation>
    <scope>NUCLEOTIDE SEQUENCE [LARGE SCALE GENOMIC DNA]</scope>
    <source>
        <strain>ATCC 700860 / DSM 12428 / JCM 9974 / NBRC 100139 / OT-3</strain>
    </source>
</reference>